<name>NTH_SCHPO</name>
<gene>
    <name type="primary">nth1</name>
    <name type="ORF">SPAC30D11.07</name>
</gene>
<evidence type="ECO:0000255" key="1"/>
<evidence type="ECO:0000255" key="2">
    <source>
        <dbReference type="HAMAP-Rule" id="MF_03183"/>
    </source>
</evidence>
<evidence type="ECO:0000256" key="3">
    <source>
        <dbReference type="SAM" id="MobiDB-lite"/>
    </source>
</evidence>
<evidence type="ECO:0000269" key="4">
    <source>
    </source>
</evidence>
<evidence type="ECO:0000269" key="5">
    <source>
    </source>
</evidence>
<evidence type="ECO:0000269" key="6">
    <source>
    </source>
</evidence>
<evidence type="ECO:0000269" key="7">
    <source>
    </source>
</evidence>
<evidence type="ECO:0000269" key="8">
    <source>
    </source>
</evidence>
<evidence type="ECO:0000269" key="9">
    <source>
    </source>
</evidence>
<organism>
    <name type="scientific">Schizosaccharomyces pombe (strain 972 / ATCC 24843)</name>
    <name type="common">Fission yeast</name>
    <dbReference type="NCBI Taxonomy" id="284812"/>
    <lineage>
        <taxon>Eukaryota</taxon>
        <taxon>Fungi</taxon>
        <taxon>Dikarya</taxon>
        <taxon>Ascomycota</taxon>
        <taxon>Taphrinomycotina</taxon>
        <taxon>Schizosaccharomycetes</taxon>
        <taxon>Schizosaccharomycetales</taxon>
        <taxon>Schizosaccharomycetaceae</taxon>
        <taxon>Schizosaccharomyces</taxon>
    </lineage>
</organism>
<proteinExistence type="evidence at protein level"/>
<comment type="function">
    <text evidence="2 4 5 7 8 9">Bifunctional DNA N-glycosylase with associated apurinic/apyrimidinic (AP) lyase function that catalyzes the first step in base excision repair (BER), the primary repair pathway for the repair of oxidative DNA damage. The DNA N-glycosylase activity releases the damaged DNA base from DNA by cleaving the N-glycosidic bond, leaving an AP site. The AP-lyase activity cleaves the phosphodiester bond 3' to the AP site by a beta-elimination. Primarily recognizes and repairs oxidative base damage of pyrimidines. Also has 8-oxo-7,8-dihydroguanine (8-oxoG) DNA glycosylase activity. Also involved in the repair of 7-methylguanine lesions, although it cannot directly repair alkylated DNA bases. Probably does so via excision of methylformamidopyrimidine (mFapy) lesions, a spontaneous processing product of 7-methylguanine.</text>
</comment>
<comment type="catalytic activity">
    <reaction evidence="2 9">
        <text>2'-deoxyribonucleotide-(2'-deoxyribose 5'-phosphate)-2'-deoxyribonucleotide-DNA = a 3'-end 2'-deoxyribonucleotide-(2,3-dehydro-2,3-deoxyribose 5'-phosphate)-DNA + a 5'-end 5'-phospho-2'-deoxyribonucleoside-DNA + H(+)</text>
        <dbReference type="Rhea" id="RHEA:66592"/>
        <dbReference type="Rhea" id="RHEA-COMP:13180"/>
        <dbReference type="Rhea" id="RHEA-COMP:16897"/>
        <dbReference type="Rhea" id="RHEA-COMP:17067"/>
        <dbReference type="ChEBI" id="CHEBI:15378"/>
        <dbReference type="ChEBI" id="CHEBI:136412"/>
        <dbReference type="ChEBI" id="CHEBI:157695"/>
        <dbReference type="ChEBI" id="CHEBI:167181"/>
        <dbReference type="EC" id="4.2.99.18"/>
    </reaction>
</comment>
<comment type="cofactor">
    <cofactor evidence="2">
        <name>[4Fe-4S] cluster</name>
        <dbReference type="ChEBI" id="CHEBI:49883"/>
    </cofactor>
    <text evidence="2">Binds 1 [4Fe-4S] cluster. The cluster does not appear to play a role in catalysis, but is probably involved in the proper positioning of the enzyme along the DNA strand.</text>
</comment>
<comment type="biophysicochemical properties">
    <kinetics>
        <KM evidence="9">963 nM for 5-hydroxy-6-hydrothymine containing duplex oligonucleotides (N-glycosylase activity)</KM>
        <KM evidence="9">173 nM for 5-hydroxyuracil containing duplex oligonucleotides (N-glycosylase activity)</KM>
        <KM evidence="9">360 nM for 5-hydroxycytosine containing duplex oligonucleotides (N-glycosylase activity)</KM>
        <KM evidence="9">1741 nM for thymine glycol containing duplex oligonucleotides (N-glycosylase activity)</KM>
        <KM evidence="9">111 nM for 5,6-dihydroxycytosine containing duplex oligonucleotides (N-glycosylase activity)</KM>
    </kinetics>
</comment>
<comment type="subcellular location">
    <subcellularLocation>
        <location evidence="2 5 6">Nucleus</location>
    </subcellularLocation>
    <subcellularLocation>
        <location evidence="2">Mitochondrion</location>
    </subcellularLocation>
</comment>
<comment type="similarity">
    <text evidence="2">Belongs to the Nth/MutY family.</text>
</comment>
<sequence>MSKDYGTPPENWREVYDEICKMKAKVVAPVDVQGCHTLGERNDPKKFRFQTLVALMLSSQTKDIVLGPTMRNLKEKLAGGLCLEDIQNIDEVSLNKLIEKVGFHNRKTIYLKQMARILSEKFQGDIPDTVEDLMTLPGVGPKMGYLCMSIAWNKTVGIGVDVHVHRICNLLHWCNTKTEEQTRAALQSWLPKELWFELNHTLVGFGQTICLPRGRRCDMCTLSSKGLCPSAFKEKSGITITKRKVKTIKRVKKRPASESPPLSPLSLPTDDLYYQSIEDKSLIKLEDLDPVDSISHMNEPLKKEPAADIDVDQKPPVAFHSTTKETRSLRRSKRVAKKSSQYFSQQSLQDIEDLV</sequence>
<keyword id="KW-0004">4Fe-4S</keyword>
<keyword id="KW-0227">DNA damage</keyword>
<keyword id="KW-0234">DNA repair</keyword>
<keyword id="KW-0326">Glycosidase</keyword>
<keyword id="KW-0378">Hydrolase</keyword>
<keyword id="KW-0408">Iron</keyword>
<keyword id="KW-0411">Iron-sulfur</keyword>
<keyword id="KW-0456">Lyase</keyword>
<keyword id="KW-0479">Metal-binding</keyword>
<keyword id="KW-0496">Mitochondrion</keyword>
<keyword id="KW-0539">Nucleus</keyword>
<keyword id="KW-1185">Reference proteome</keyword>
<accession>Q09907</accession>
<accession>Q588X4</accession>
<reference key="1">
    <citation type="journal article" date="2005" name="DNA Repair">
        <title>Roles of base excision repair enzymes Nth1p and Apn2p from Schizosaccharomyces pombe in processing alkylation and oxidative DNA damage.</title>
        <authorList>
            <person name="Sugimoto T."/>
            <person name="Igawa E."/>
            <person name="Tanihigashi H."/>
            <person name="Matsubara M."/>
            <person name="Ide H."/>
            <person name="Ikeda S."/>
        </authorList>
    </citation>
    <scope>NUCLEOTIDE SEQUENCE [MRNA]</scope>
    <scope>FUNCTION</scope>
    <scope>SUBCELLULAR LOCATION</scope>
</reference>
<reference key="2">
    <citation type="journal article" date="2002" name="Nature">
        <title>The genome sequence of Schizosaccharomyces pombe.</title>
        <authorList>
            <person name="Wood V."/>
            <person name="Gwilliam R."/>
            <person name="Rajandream M.A."/>
            <person name="Lyne M.H."/>
            <person name="Lyne R."/>
            <person name="Stewart A."/>
            <person name="Sgouros J.G."/>
            <person name="Peat N."/>
            <person name="Hayles J."/>
            <person name="Baker S.G."/>
            <person name="Basham D."/>
            <person name="Bowman S."/>
            <person name="Brooks K."/>
            <person name="Brown D."/>
            <person name="Brown S."/>
            <person name="Chillingworth T."/>
            <person name="Churcher C.M."/>
            <person name="Collins M."/>
            <person name="Connor R."/>
            <person name="Cronin A."/>
            <person name="Davis P."/>
            <person name="Feltwell T."/>
            <person name="Fraser A."/>
            <person name="Gentles S."/>
            <person name="Goble A."/>
            <person name="Hamlin N."/>
            <person name="Harris D.E."/>
            <person name="Hidalgo J."/>
            <person name="Hodgson G."/>
            <person name="Holroyd S."/>
            <person name="Hornsby T."/>
            <person name="Howarth S."/>
            <person name="Huckle E.J."/>
            <person name="Hunt S."/>
            <person name="Jagels K."/>
            <person name="James K.D."/>
            <person name="Jones L."/>
            <person name="Jones M."/>
            <person name="Leather S."/>
            <person name="McDonald S."/>
            <person name="McLean J."/>
            <person name="Mooney P."/>
            <person name="Moule S."/>
            <person name="Mungall K.L."/>
            <person name="Murphy L.D."/>
            <person name="Niblett D."/>
            <person name="Odell C."/>
            <person name="Oliver K."/>
            <person name="O'Neil S."/>
            <person name="Pearson D."/>
            <person name="Quail M.A."/>
            <person name="Rabbinowitsch E."/>
            <person name="Rutherford K.M."/>
            <person name="Rutter S."/>
            <person name="Saunders D."/>
            <person name="Seeger K."/>
            <person name="Sharp S."/>
            <person name="Skelton J."/>
            <person name="Simmonds M.N."/>
            <person name="Squares R."/>
            <person name="Squares S."/>
            <person name="Stevens K."/>
            <person name="Taylor K."/>
            <person name="Taylor R.G."/>
            <person name="Tivey A."/>
            <person name="Walsh S.V."/>
            <person name="Warren T."/>
            <person name="Whitehead S."/>
            <person name="Woodward J.R."/>
            <person name="Volckaert G."/>
            <person name="Aert R."/>
            <person name="Robben J."/>
            <person name="Grymonprez B."/>
            <person name="Weltjens I."/>
            <person name="Vanstreels E."/>
            <person name="Rieger M."/>
            <person name="Schaefer M."/>
            <person name="Mueller-Auer S."/>
            <person name="Gabel C."/>
            <person name="Fuchs M."/>
            <person name="Duesterhoeft A."/>
            <person name="Fritzc C."/>
            <person name="Holzer E."/>
            <person name="Moestl D."/>
            <person name="Hilbert H."/>
            <person name="Borzym K."/>
            <person name="Langer I."/>
            <person name="Beck A."/>
            <person name="Lehrach H."/>
            <person name="Reinhardt R."/>
            <person name="Pohl T.M."/>
            <person name="Eger P."/>
            <person name="Zimmermann W."/>
            <person name="Wedler H."/>
            <person name="Wambutt R."/>
            <person name="Purnelle B."/>
            <person name="Goffeau A."/>
            <person name="Cadieu E."/>
            <person name="Dreano S."/>
            <person name="Gloux S."/>
            <person name="Lelaure V."/>
            <person name="Mottier S."/>
            <person name="Galibert F."/>
            <person name="Aves S.J."/>
            <person name="Xiang Z."/>
            <person name="Hunt C."/>
            <person name="Moore K."/>
            <person name="Hurst S.M."/>
            <person name="Lucas M."/>
            <person name="Rochet M."/>
            <person name="Gaillardin C."/>
            <person name="Tallada V.A."/>
            <person name="Garzon A."/>
            <person name="Thode G."/>
            <person name="Daga R.R."/>
            <person name="Cruzado L."/>
            <person name="Jimenez J."/>
            <person name="Sanchez M."/>
            <person name="del Rey F."/>
            <person name="Benito J."/>
            <person name="Dominguez A."/>
            <person name="Revuelta J.L."/>
            <person name="Moreno S."/>
            <person name="Armstrong J."/>
            <person name="Forsburg S.L."/>
            <person name="Cerutti L."/>
            <person name="Lowe T."/>
            <person name="McCombie W.R."/>
            <person name="Paulsen I."/>
            <person name="Potashkin J."/>
            <person name="Shpakovski G.V."/>
            <person name="Ussery D."/>
            <person name="Barrell B.G."/>
            <person name="Nurse P."/>
        </authorList>
    </citation>
    <scope>NUCLEOTIDE SEQUENCE [LARGE SCALE GENOMIC DNA]</scope>
    <source>
        <strain>972 / ATCC 24843</strain>
    </source>
</reference>
<reference key="3">
    <citation type="journal article" date="1996" name="Nucleic Acids Res.">
        <title>Molecular cloning and functional analysis of a Schizosaccharomyces pombe homologue of Escherichia coli endonuclease III.</title>
        <authorList>
            <person name="Roldan-Arjona T."/>
            <person name="Anselmino C."/>
            <person name="Lindahl T."/>
        </authorList>
    </citation>
    <scope>FUNCTION</scope>
    <scope>SUBSTRATES</scope>
</reference>
<reference key="4">
    <citation type="journal article" date="1998" name="Biochemistry">
        <title>Substrate specificity of Schizosaccharomyces pombe Nth protein for products of oxidative DNA damage.</title>
        <authorList>
            <person name="Karahalil B."/>
            <person name="Roldan-Arjona T."/>
            <person name="Dizdaroglu M."/>
        </authorList>
    </citation>
    <scope>FUNCTION</scope>
    <scope>CATALYTIC ACTIVITY</scope>
    <scope>BIOPHYSICOCHEMICAL PROPERTIES</scope>
</reference>
<reference key="5">
    <citation type="journal article" date="2003" name="Mol. Microbiol.">
        <title>A new Schizosaccharomyces pombe base excision repair mutant, nth1, reveals overlapping pathways for repair of DNA base damage.</title>
        <authorList>
            <person name="Osman F."/>
            <person name="Bjoras M."/>
            <person name="Alseth I."/>
            <person name="Morland I."/>
            <person name="McCready S."/>
            <person name="Seeberg E."/>
            <person name="Tsaneva I."/>
        </authorList>
    </citation>
    <scope>FUNCTION IN MMS-DAMAGE REPAIR</scope>
</reference>
<reference key="6">
    <citation type="journal article" date="2006" name="Nat. Biotechnol.">
        <title>ORFeome cloning and global analysis of protein localization in the fission yeast Schizosaccharomyces pombe.</title>
        <authorList>
            <person name="Matsuyama A."/>
            <person name="Arai R."/>
            <person name="Yashiroda Y."/>
            <person name="Shirai A."/>
            <person name="Kamata A."/>
            <person name="Sekido S."/>
            <person name="Kobayashi Y."/>
            <person name="Hashimoto A."/>
            <person name="Hamamoto M."/>
            <person name="Hiraoka Y."/>
            <person name="Horinouchi S."/>
            <person name="Yoshida M."/>
        </authorList>
    </citation>
    <scope>SUBCELLULAR LOCATION [LARGE SCALE ANALYSIS]</scope>
</reference>
<reference key="7">
    <citation type="journal article" date="2007" name="J. Radiat. Res.">
        <title>Recombinant Schizosaccharomyces pombe Nth1 protein exhibits DNA glycosylase activities for 8-oxo-7,8-dihydroguanine and thymine residues oxidized in the methyl group.</title>
        <authorList>
            <person name="Yonekura S."/>
            <person name="Nakamura N."/>
            <person name="Doi T."/>
            <person name="Sugiyama H."/>
            <person name="Yamamoto K."/>
            <person name="Yonei S."/>
            <person name="Zhang Q.M."/>
        </authorList>
    </citation>
    <scope>FUNCTION</scope>
    <scope>SUBSTRATES</scope>
</reference>
<protein>
    <recommendedName>
        <fullName evidence="2">Endonuclease III homolog</fullName>
        <ecNumber evidence="2">3.2.2.-</ecNumber>
        <ecNumber evidence="2 9">4.2.99.18</ecNumber>
    </recommendedName>
    <alternativeName>
        <fullName evidence="2">Bifunctional DNA N-glycosylase/DNA-(apurinic or apyrimidinic site) lyase</fullName>
        <shortName evidence="2">DNA glycosylase/AP lyase</shortName>
    </alternativeName>
</protein>
<dbReference type="EC" id="3.2.2.-" evidence="2"/>
<dbReference type="EC" id="4.2.99.18" evidence="2 9"/>
<dbReference type="EMBL" id="AB191154">
    <property type="protein sequence ID" value="BAD93307.1"/>
    <property type="molecule type" value="mRNA"/>
</dbReference>
<dbReference type="EMBL" id="CU329670">
    <property type="protein sequence ID" value="CAA91893.1"/>
    <property type="molecule type" value="Genomic_DNA"/>
</dbReference>
<dbReference type="PIR" id="JC6066">
    <property type="entry name" value="S62565"/>
</dbReference>
<dbReference type="RefSeq" id="NP_593210.1">
    <property type="nucleotide sequence ID" value="NM_001018606.2"/>
</dbReference>
<dbReference type="SMR" id="Q09907"/>
<dbReference type="BioGRID" id="279928">
    <property type="interactions" value="51"/>
</dbReference>
<dbReference type="FunCoup" id="Q09907">
    <property type="interactions" value="336"/>
</dbReference>
<dbReference type="STRING" id="284812.Q09907"/>
<dbReference type="iPTMnet" id="Q09907"/>
<dbReference type="PaxDb" id="4896-SPAC30D11.07.1"/>
<dbReference type="EnsemblFungi" id="SPAC30D11.07.1">
    <property type="protein sequence ID" value="SPAC30D11.07.1:pep"/>
    <property type="gene ID" value="SPAC30D11.07"/>
</dbReference>
<dbReference type="GeneID" id="2543510"/>
<dbReference type="KEGG" id="spo:2543510"/>
<dbReference type="PomBase" id="SPAC30D11.07">
    <property type="gene designation" value="nth1"/>
</dbReference>
<dbReference type="VEuPathDB" id="FungiDB:SPAC30D11.07"/>
<dbReference type="eggNOG" id="KOG1921">
    <property type="taxonomic scope" value="Eukaryota"/>
</dbReference>
<dbReference type="HOGENOM" id="CLU_012862_4_2_1"/>
<dbReference type="InParanoid" id="Q09907"/>
<dbReference type="OMA" id="RGKRCDL"/>
<dbReference type="PhylomeDB" id="Q09907"/>
<dbReference type="Reactome" id="R-SPO-110329">
    <property type="pathway name" value="Cleavage of the damaged pyrimidine"/>
</dbReference>
<dbReference type="PRO" id="PR:Q09907"/>
<dbReference type="Proteomes" id="UP000002485">
    <property type="component" value="Chromosome I"/>
</dbReference>
<dbReference type="GO" id="GO:0005759">
    <property type="term" value="C:mitochondrial matrix"/>
    <property type="evidence" value="ECO:0000250"/>
    <property type="project" value="PomBase"/>
</dbReference>
<dbReference type="GO" id="GO:0005634">
    <property type="term" value="C:nucleus"/>
    <property type="evidence" value="ECO:0000314"/>
    <property type="project" value="PomBase"/>
</dbReference>
<dbReference type="GO" id="GO:0051539">
    <property type="term" value="F:4 iron, 4 sulfur cluster binding"/>
    <property type="evidence" value="ECO:0007669"/>
    <property type="project" value="UniProtKB-KW"/>
</dbReference>
<dbReference type="GO" id="GO:0034042">
    <property type="term" value="F:5-formyluracil DNA N-glycosylase activity"/>
    <property type="evidence" value="ECO:0000314"/>
    <property type="project" value="PomBase"/>
</dbReference>
<dbReference type="GO" id="GO:0034043">
    <property type="term" value="F:5-hydroxymethyluracil DNA N-glycosylase activity"/>
    <property type="evidence" value="ECO:0000314"/>
    <property type="project" value="PomBase"/>
</dbReference>
<dbReference type="GO" id="GO:0034039">
    <property type="term" value="F:8-oxo-7,8-dihydroguanine DNA N-glycosylase activity"/>
    <property type="evidence" value="ECO:0000314"/>
    <property type="project" value="PomBase"/>
</dbReference>
<dbReference type="GO" id="GO:0140078">
    <property type="term" value="F:class I DNA-(apurinic or apyrimidinic site) endonuclease activity"/>
    <property type="evidence" value="ECO:0000314"/>
    <property type="project" value="PomBase"/>
</dbReference>
<dbReference type="GO" id="GO:0003677">
    <property type="term" value="F:DNA binding"/>
    <property type="evidence" value="ECO:0000255"/>
    <property type="project" value="PomBase"/>
</dbReference>
<dbReference type="GO" id="GO:0003906">
    <property type="term" value="F:DNA-(apurinic or apyrimidinic site) endonuclease activity"/>
    <property type="evidence" value="ECO:0000318"/>
    <property type="project" value="GO_Central"/>
</dbReference>
<dbReference type="GO" id="GO:0046872">
    <property type="term" value="F:metal ion binding"/>
    <property type="evidence" value="ECO:0007669"/>
    <property type="project" value="UniProtKB-KW"/>
</dbReference>
<dbReference type="GO" id="GO:0008534">
    <property type="term" value="F:oxidized purine nucleobase lesion DNA N-glycosylase activity"/>
    <property type="evidence" value="ECO:0000315"/>
    <property type="project" value="PomBase"/>
</dbReference>
<dbReference type="GO" id="GO:0000703">
    <property type="term" value="F:oxidized pyrimidine nucleobase lesion DNA N-glycosylase activity"/>
    <property type="evidence" value="ECO:0000314"/>
    <property type="project" value="PomBase"/>
</dbReference>
<dbReference type="GO" id="GO:0006284">
    <property type="term" value="P:base-excision repair"/>
    <property type="evidence" value="ECO:0000314"/>
    <property type="project" value="PomBase"/>
</dbReference>
<dbReference type="GO" id="GO:0006285">
    <property type="term" value="P:base-excision repair, AP site formation"/>
    <property type="evidence" value="ECO:0000314"/>
    <property type="project" value="PomBase"/>
</dbReference>
<dbReference type="GO" id="GO:0043504">
    <property type="term" value="P:mitochondrial DNA repair"/>
    <property type="evidence" value="ECO:0000303"/>
    <property type="project" value="PomBase"/>
</dbReference>
<dbReference type="GO" id="GO:0006289">
    <property type="term" value="P:nucleotide-excision repair"/>
    <property type="evidence" value="ECO:0000318"/>
    <property type="project" value="GO_Central"/>
</dbReference>
<dbReference type="CDD" id="cd00056">
    <property type="entry name" value="ENDO3c"/>
    <property type="match status" value="1"/>
</dbReference>
<dbReference type="FunFam" id="1.10.340.30:FF:000014">
    <property type="entry name" value="Endonuclease III homolog"/>
    <property type="match status" value="1"/>
</dbReference>
<dbReference type="Gene3D" id="1.10.1670.10">
    <property type="entry name" value="Helix-hairpin-Helix base-excision DNA repair enzymes (C-terminal)"/>
    <property type="match status" value="1"/>
</dbReference>
<dbReference type="Gene3D" id="1.10.340.30">
    <property type="entry name" value="Hypothetical protein, domain 2"/>
    <property type="match status" value="1"/>
</dbReference>
<dbReference type="HAMAP" id="MF_03183">
    <property type="entry name" value="Endonuclease_III_Nth"/>
    <property type="match status" value="1"/>
</dbReference>
<dbReference type="InterPro" id="IPR011257">
    <property type="entry name" value="DNA_glycosylase"/>
</dbReference>
<dbReference type="InterPro" id="IPR004036">
    <property type="entry name" value="Endonuclease-III-like_CS2"/>
</dbReference>
<dbReference type="InterPro" id="IPR003265">
    <property type="entry name" value="HhH-GPD_domain"/>
</dbReference>
<dbReference type="InterPro" id="IPR023170">
    <property type="entry name" value="HhH_base_excis_C"/>
</dbReference>
<dbReference type="InterPro" id="IPR000445">
    <property type="entry name" value="HhH_motif"/>
</dbReference>
<dbReference type="InterPro" id="IPR030841">
    <property type="entry name" value="NTH1"/>
</dbReference>
<dbReference type="PANTHER" id="PTHR43286">
    <property type="entry name" value="ENDONUCLEASE III-LIKE PROTEIN 1"/>
    <property type="match status" value="1"/>
</dbReference>
<dbReference type="PANTHER" id="PTHR43286:SF1">
    <property type="entry name" value="ENDONUCLEASE III-LIKE PROTEIN 1"/>
    <property type="match status" value="1"/>
</dbReference>
<dbReference type="Pfam" id="PF00633">
    <property type="entry name" value="HHH"/>
    <property type="match status" value="1"/>
</dbReference>
<dbReference type="Pfam" id="PF00730">
    <property type="entry name" value="HhH-GPD"/>
    <property type="match status" value="1"/>
</dbReference>
<dbReference type="SMART" id="SM00478">
    <property type="entry name" value="ENDO3c"/>
    <property type="match status" value="1"/>
</dbReference>
<dbReference type="SUPFAM" id="SSF48150">
    <property type="entry name" value="DNA-glycosylase"/>
    <property type="match status" value="1"/>
</dbReference>
<dbReference type="PROSITE" id="PS01155">
    <property type="entry name" value="ENDONUCLEASE_III_2"/>
    <property type="match status" value="1"/>
</dbReference>
<feature type="chain" id="PRO_0000102226" description="Endonuclease III homolog">
    <location>
        <begin position="1"/>
        <end position="355"/>
    </location>
</feature>
<feature type="domain" description="HhH" evidence="2">
    <location>
        <begin position="122"/>
        <end position="149"/>
    </location>
</feature>
<feature type="region of interest" description="Disordered" evidence="3">
    <location>
        <begin position="303"/>
        <end position="355"/>
    </location>
</feature>
<feature type="short sequence motif" description="Nuclear localization signal" evidence="1">
    <location>
        <begin position="44"/>
        <end position="50"/>
    </location>
</feature>
<feature type="short sequence motif" description="Nuclear localization signal" evidence="1">
    <location>
        <begin position="252"/>
        <end position="255"/>
    </location>
</feature>
<feature type="compositionally biased region" description="Polar residues" evidence="3">
    <location>
        <begin position="338"/>
        <end position="349"/>
    </location>
</feature>
<feature type="active site" description="Nucleophile; for N-glycosylase activity" evidence="2">
    <location>
        <position position="142"/>
    </location>
</feature>
<feature type="binding site" evidence="2">
    <location>
        <position position="210"/>
    </location>
    <ligand>
        <name>[4Fe-4S] cluster</name>
        <dbReference type="ChEBI" id="CHEBI:49883"/>
    </ligand>
</feature>
<feature type="binding site" evidence="2">
    <location>
        <position position="217"/>
    </location>
    <ligand>
        <name>[4Fe-4S] cluster</name>
        <dbReference type="ChEBI" id="CHEBI:49883"/>
    </ligand>
</feature>
<feature type="binding site" evidence="2">
    <location>
        <position position="220"/>
    </location>
    <ligand>
        <name>[4Fe-4S] cluster</name>
        <dbReference type="ChEBI" id="CHEBI:49883"/>
    </ligand>
</feature>
<feature type="binding site" evidence="2">
    <location>
        <position position="228"/>
    </location>
    <ligand>
        <name>[4Fe-4S] cluster</name>
        <dbReference type="ChEBI" id="CHEBI:49883"/>
    </ligand>
</feature>
<feature type="site" description="Important for catalytic activity" evidence="2">
    <location>
        <position position="161"/>
    </location>
</feature>